<organism>
    <name type="scientific">Cyanothece sp. (strain PCC 7425 / ATCC 29141)</name>
    <dbReference type="NCBI Taxonomy" id="395961"/>
    <lineage>
        <taxon>Bacteria</taxon>
        <taxon>Bacillati</taxon>
        <taxon>Cyanobacteriota</taxon>
        <taxon>Cyanophyceae</taxon>
        <taxon>Gomontiellales</taxon>
        <taxon>Cyanothecaceae</taxon>
        <taxon>Cyanothece</taxon>
    </lineage>
</organism>
<name>HIS1_CYAP4</name>
<protein>
    <recommendedName>
        <fullName evidence="1">ATP phosphoribosyltransferase</fullName>
        <shortName evidence="1">ATP-PRT</shortName>
        <shortName evidence="1">ATP-PRTase</shortName>
        <ecNumber evidence="1">2.4.2.17</ecNumber>
    </recommendedName>
</protein>
<keyword id="KW-0028">Amino-acid biosynthesis</keyword>
<keyword id="KW-0067">ATP-binding</keyword>
<keyword id="KW-0963">Cytoplasm</keyword>
<keyword id="KW-0328">Glycosyltransferase</keyword>
<keyword id="KW-0368">Histidine biosynthesis</keyword>
<keyword id="KW-0547">Nucleotide-binding</keyword>
<keyword id="KW-0808">Transferase</keyword>
<reference key="1">
    <citation type="journal article" date="2011" name="MBio">
        <title>Novel metabolic attributes of the genus Cyanothece, comprising a group of unicellular nitrogen-fixing Cyanobacteria.</title>
        <authorList>
            <person name="Bandyopadhyay A."/>
            <person name="Elvitigala T."/>
            <person name="Welsh E."/>
            <person name="Stockel J."/>
            <person name="Liberton M."/>
            <person name="Min H."/>
            <person name="Sherman L.A."/>
            <person name="Pakrasi H.B."/>
        </authorList>
    </citation>
    <scope>NUCLEOTIDE SEQUENCE [LARGE SCALE GENOMIC DNA]</scope>
    <source>
        <strain>PCC 7425 / ATCC 29141</strain>
    </source>
</reference>
<proteinExistence type="inferred from homology"/>
<comment type="function">
    <text evidence="1">Catalyzes the condensation of ATP and 5-phosphoribose 1-diphosphate to form N'-(5'-phosphoribosyl)-ATP (PR-ATP). Has a crucial role in the pathway because the rate of histidine biosynthesis seems to be controlled primarily by regulation of HisG enzymatic activity.</text>
</comment>
<comment type="catalytic activity">
    <reaction evidence="1">
        <text>1-(5-phospho-beta-D-ribosyl)-ATP + diphosphate = 5-phospho-alpha-D-ribose 1-diphosphate + ATP</text>
        <dbReference type="Rhea" id="RHEA:18473"/>
        <dbReference type="ChEBI" id="CHEBI:30616"/>
        <dbReference type="ChEBI" id="CHEBI:33019"/>
        <dbReference type="ChEBI" id="CHEBI:58017"/>
        <dbReference type="ChEBI" id="CHEBI:73183"/>
        <dbReference type="EC" id="2.4.2.17"/>
    </reaction>
</comment>
<comment type="pathway">
    <text evidence="1">Amino-acid biosynthesis; L-histidine biosynthesis; L-histidine from 5-phospho-alpha-D-ribose 1-diphosphate: step 1/9.</text>
</comment>
<comment type="subunit">
    <text evidence="1">Heteromultimer composed of HisG and HisZ subunits.</text>
</comment>
<comment type="subcellular location">
    <subcellularLocation>
        <location evidence="1">Cytoplasm</location>
    </subcellularLocation>
</comment>
<comment type="domain">
    <text>Lacks the C-terminal regulatory region which is replaced by HisZ.</text>
</comment>
<comment type="similarity">
    <text evidence="1">Belongs to the ATP phosphoribosyltransferase family. Short subfamily.</text>
</comment>
<evidence type="ECO:0000255" key="1">
    <source>
        <dbReference type="HAMAP-Rule" id="MF_01018"/>
    </source>
</evidence>
<gene>
    <name evidence="1" type="primary">hisG</name>
    <name type="ordered locus">Cyan7425_3496</name>
</gene>
<dbReference type="EC" id="2.4.2.17" evidence="1"/>
<dbReference type="EMBL" id="CP001344">
    <property type="protein sequence ID" value="ACL45819.1"/>
    <property type="molecule type" value="Genomic_DNA"/>
</dbReference>
<dbReference type="SMR" id="B8HQZ8"/>
<dbReference type="STRING" id="395961.Cyan7425_3496"/>
<dbReference type="KEGG" id="cyn:Cyan7425_3496"/>
<dbReference type="eggNOG" id="COG0040">
    <property type="taxonomic scope" value="Bacteria"/>
</dbReference>
<dbReference type="HOGENOM" id="CLU_038115_2_0_3"/>
<dbReference type="OrthoDB" id="9801867at2"/>
<dbReference type="UniPathway" id="UPA00031">
    <property type="reaction ID" value="UER00006"/>
</dbReference>
<dbReference type="GO" id="GO:0005737">
    <property type="term" value="C:cytoplasm"/>
    <property type="evidence" value="ECO:0007669"/>
    <property type="project" value="UniProtKB-SubCell"/>
</dbReference>
<dbReference type="GO" id="GO:0005524">
    <property type="term" value="F:ATP binding"/>
    <property type="evidence" value="ECO:0007669"/>
    <property type="project" value="UniProtKB-KW"/>
</dbReference>
<dbReference type="GO" id="GO:0003879">
    <property type="term" value="F:ATP phosphoribosyltransferase activity"/>
    <property type="evidence" value="ECO:0007669"/>
    <property type="project" value="UniProtKB-UniRule"/>
</dbReference>
<dbReference type="GO" id="GO:0000105">
    <property type="term" value="P:L-histidine biosynthetic process"/>
    <property type="evidence" value="ECO:0007669"/>
    <property type="project" value="UniProtKB-UniRule"/>
</dbReference>
<dbReference type="CDD" id="cd13595">
    <property type="entry name" value="PBP2_HisGs"/>
    <property type="match status" value="1"/>
</dbReference>
<dbReference type="FunFam" id="3.40.190.10:FF:000008">
    <property type="entry name" value="ATP phosphoribosyltransferase"/>
    <property type="match status" value="1"/>
</dbReference>
<dbReference type="Gene3D" id="3.40.190.10">
    <property type="entry name" value="Periplasmic binding protein-like II"/>
    <property type="match status" value="2"/>
</dbReference>
<dbReference type="HAMAP" id="MF_01018">
    <property type="entry name" value="HisG_Short"/>
    <property type="match status" value="1"/>
</dbReference>
<dbReference type="InterPro" id="IPR013820">
    <property type="entry name" value="ATP_PRibTrfase_cat"/>
</dbReference>
<dbReference type="InterPro" id="IPR018198">
    <property type="entry name" value="ATP_PRibTrfase_CS"/>
</dbReference>
<dbReference type="InterPro" id="IPR001348">
    <property type="entry name" value="ATP_PRibTrfase_HisG"/>
</dbReference>
<dbReference type="InterPro" id="IPR024893">
    <property type="entry name" value="ATP_PRibTrfase_HisG_short"/>
</dbReference>
<dbReference type="NCBIfam" id="TIGR00070">
    <property type="entry name" value="hisG"/>
    <property type="match status" value="1"/>
</dbReference>
<dbReference type="PANTHER" id="PTHR21403:SF8">
    <property type="entry name" value="ATP PHOSPHORIBOSYLTRANSFERASE"/>
    <property type="match status" value="1"/>
</dbReference>
<dbReference type="PANTHER" id="PTHR21403">
    <property type="entry name" value="ATP PHOSPHORIBOSYLTRANSFERASE ATP-PRTASE"/>
    <property type="match status" value="1"/>
</dbReference>
<dbReference type="Pfam" id="PF01634">
    <property type="entry name" value="HisG"/>
    <property type="match status" value="1"/>
</dbReference>
<dbReference type="SUPFAM" id="SSF53850">
    <property type="entry name" value="Periplasmic binding protein-like II"/>
    <property type="match status" value="1"/>
</dbReference>
<dbReference type="PROSITE" id="PS01316">
    <property type="entry name" value="ATP_P_PHORIBOSYLTR"/>
    <property type="match status" value="1"/>
</dbReference>
<sequence>MLTVALPKGALLKESIRLFQAIGLDFSGFLDPANRQLQIVAPTGNAQALLVRTQDVPVYVEYGQAQLGIVGYDVLREKNPQVAHLLDLQFGRCRLSVAVKQASPYRCSLDLPPHSRVASKFVHCARAYFEQMDLPVEVVPLYGSVELGPLTGMSEAIVDLVSTGRTLKENGLVELEVLFESTARLIAHPLSYRLNRFGLHQPIEQIQALLSSPVP</sequence>
<accession>B8HQZ8</accession>
<feature type="chain" id="PRO_1000213263" description="ATP phosphoribosyltransferase">
    <location>
        <begin position="1"/>
        <end position="215"/>
    </location>
</feature>